<keyword id="KW-0963">Cytoplasm</keyword>
<keyword id="KW-0342">GTP-binding</keyword>
<keyword id="KW-0436">Ligase</keyword>
<keyword id="KW-0460">Magnesium</keyword>
<keyword id="KW-0479">Metal-binding</keyword>
<keyword id="KW-0547">Nucleotide-binding</keyword>
<keyword id="KW-0658">Purine biosynthesis</keyword>
<keyword id="KW-1185">Reference proteome</keyword>
<comment type="function">
    <text evidence="1">Plays an important role in the de novo pathway of purine nucleotide biosynthesis. Catalyzes the first committed step in the biosynthesis of AMP from IMP.</text>
</comment>
<comment type="catalytic activity">
    <reaction evidence="1">
        <text>IMP + L-aspartate + GTP = N(6)-(1,2-dicarboxyethyl)-AMP + GDP + phosphate + 2 H(+)</text>
        <dbReference type="Rhea" id="RHEA:15753"/>
        <dbReference type="ChEBI" id="CHEBI:15378"/>
        <dbReference type="ChEBI" id="CHEBI:29991"/>
        <dbReference type="ChEBI" id="CHEBI:37565"/>
        <dbReference type="ChEBI" id="CHEBI:43474"/>
        <dbReference type="ChEBI" id="CHEBI:57567"/>
        <dbReference type="ChEBI" id="CHEBI:58053"/>
        <dbReference type="ChEBI" id="CHEBI:58189"/>
        <dbReference type="EC" id="6.3.4.4"/>
    </reaction>
</comment>
<comment type="cofactor">
    <cofactor evidence="1">
        <name>Mg(2+)</name>
        <dbReference type="ChEBI" id="CHEBI:18420"/>
    </cofactor>
    <text evidence="1">Binds 1 Mg(2+) ion per subunit.</text>
</comment>
<comment type="pathway">
    <text evidence="1">Purine metabolism; AMP biosynthesis via de novo pathway; AMP from IMP: step 1/2.</text>
</comment>
<comment type="subunit">
    <text evidence="1">Homodimer.</text>
</comment>
<comment type="subcellular location">
    <subcellularLocation>
        <location evidence="1">Cytoplasm</location>
    </subcellularLocation>
</comment>
<comment type="similarity">
    <text evidence="1">Belongs to the adenylosuccinate synthetase family.</text>
</comment>
<evidence type="ECO:0000255" key="1">
    <source>
        <dbReference type="HAMAP-Rule" id="MF_00011"/>
    </source>
</evidence>
<accession>Q13X40</accession>
<feature type="chain" id="PRO_1000000792" description="Adenylosuccinate synthetase">
    <location>
        <begin position="1"/>
        <end position="448"/>
    </location>
</feature>
<feature type="active site" description="Proton acceptor" evidence="1">
    <location>
        <position position="23"/>
    </location>
</feature>
<feature type="active site" description="Proton donor" evidence="1">
    <location>
        <position position="51"/>
    </location>
</feature>
<feature type="binding site" evidence="1">
    <location>
        <begin position="22"/>
        <end position="28"/>
    </location>
    <ligand>
        <name>GTP</name>
        <dbReference type="ChEBI" id="CHEBI:37565"/>
    </ligand>
</feature>
<feature type="binding site" description="in other chain" evidence="1">
    <location>
        <begin position="23"/>
        <end position="26"/>
    </location>
    <ligand>
        <name>IMP</name>
        <dbReference type="ChEBI" id="CHEBI:58053"/>
        <note>ligand shared between dimeric partners</note>
    </ligand>
</feature>
<feature type="binding site" evidence="1">
    <location>
        <position position="23"/>
    </location>
    <ligand>
        <name>Mg(2+)</name>
        <dbReference type="ChEBI" id="CHEBI:18420"/>
    </ligand>
</feature>
<feature type="binding site" description="in other chain" evidence="1">
    <location>
        <begin position="48"/>
        <end position="51"/>
    </location>
    <ligand>
        <name>IMP</name>
        <dbReference type="ChEBI" id="CHEBI:58053"/>
        <note>ligand shared between dimeric partners</note>
    </ligand>
</feature>
<feature type="binding site" evidence="1">
    <location>
        <begin position="50"/>
        <end position="52"/>
    </location>
    <ligand>
        <name>GTP</name>
        <dbReference type="ChEBI" id="CHEBI:37565"/>
    </ligand>
</feature>
<feature type="binding site" evidence="1">
    <location>
        <position position="50"/>
    </location>
    <ligand>
        <name>Mg(2+)</name>
        <dbReference type="ChEBI" id="CHEBI:18420"/>
    </ligand>
</feature>
<feature type="binding site" description="in other chain" evidence="1">
    <location>
        <position position="139"/>
    </location>
    <ligand>
        <name>IMP</name>
        <dbReference type="ChEBI" id="CHEBI:58053"/>
        <note>ligand shared between dimeric partners</note>
    </ligand>
</feature>
<feature type="binding site" evidence="1">
    <location>
        <position position="153"/>
    </location>
    <ligand>
        <name>IMP</name>
        <dbReference type="ChEBI" id="CHEBI:58053"/>
        <note>ligand shared between dimeric partners</note>
    </ligand>
</feature>
<feature type="binding site" description="in other chain" evidence="1">
    <location>
        <position position="234"/>
    </location>
    <ligand>
        <name>IMP</name>
        <dbReference type="ChEBI" id="CHEBI:58053"/>
        <note>ligand shared between dimeric partners</note>
    </ligand>
</feature>
<feature type="binding site" description="in other chain" evidence="1">
    <location>
        <position position="249"/>
    </location>
    <ligand>
        <name>IMP</name>
        <dbReference type="ChEBI" id="CHEBI:58053"/>
        <note>ligand shared between dimeric partners</note>
    </ligand>
</feature>
<feature type="binding site" evidence="1">
    <location>
        <begin position="317"/>
        <end position="323"/>
    </location>
    <ligand>
        <name>substrate</name>
    </ligand>
</feature>
<feature type="binding site" description="in other chain" evidence="1">
    <location>
        <position position="321"/>
    </location>
    <ligand>
        <name>IMP</name>
        <dbReference type="ChEBI" id="CHEBI:58053"/>
        <note>ligand shared between dimeric partners</note>
    </ligand>
</feature>
<feature type="binding site" evidence="1">
    <location>
        <position position="323"/>
    </location>
    <ligand>
        <name>GTP</name>
        <dbReference type="ChEBI" id="CHEBI:37565"/>
    </ligand>
</feature>
<feature type="binding site" evidence="1">
    <location>
        <begin position="349"/>
        <end position="351"/>
    </location>
    <ligand>
        <name>GTP</name>
        <dbReference type="ChEBI" id="CHEBI:37565"/>
    </ligand>
</feature>
<feature type="binding site" evidence="1">
    <location>
        <begin position="431"/>
        <end position="433"/>
    </location>
    <ligand>
        <name>GTP</name>
        <dbReference type="ChEBI" id="CHEBI:37565"/>
    </ligand>
</feature>
<gene>
    <name evidence="1" type="primary">purA</name>
    <name type="ordered locus">Bxeno_A2811</name>
    <name type="ORF">Bxe_A1606</name>
</gene>
<organism>
    <name type="scientific">Paraburkholderia xenovorans (strain LB400)</name>
    <dbReference type="NCBI Taxonomy" id="266265"/>
    <lineage>
        <taxon>Bacteria</taxon>
        <taxon>Pseudomonadati</taxon>
        <taxon>Pseudomonadota</taxon>
        <taxon>Betaproteobacteria</taxon>
        <taxon>Burkholderiales</taxon>
        <taxon>Burkholderiaceae</taxon>
        <taxon>Paraburkholderia</taxon>
    </lineage>
</organism>
<sequence length="448" mass="48324">MSASAVNVNPGRNVVVVGTQWGDEGKGKIVDWLTDHAQGVVRFQGGHNAGHTLIIGGKKTILRLIPSGIMHPGVACYIGNGVVLSPEALFKEIGELEAAGVDVQNRLFISEATTLILPYHIAIDQGREARRGAGKIGTTGRGIGPAYEDKVARRGLRVQDLFEPEIFAERLRENLDYHNFVLTQYLGVAAVDFQQTLDTMLSYADRLRPMVTDVSRRLYDVNAAGSNLLFEGAQGTLLDIDHGTYPFVTSSNCVAGAATAGAGVGPQKLNYILGITKAYCTRVGSGPFPSELYDADNAARQEAIGLELATVGKEFGSVTGRPRRTGWLDAAALRRSIQINGVSGLCMTKLDVLDGLDEVKLCVGYKVDGKNVDLLPRGASEVARCEPVYETFAGWKESTVGIKEWDKLPANARAYLSRVQEVAGIPIDMVSTGPDRDETILLRHPFKV</sequence>
<dbReference type="EC" id="6.3.4.4" evidence="1"/>
<dbReference type="EMBL" id="CP000270">
    <property type="protein sequence ID" value="ABE31349.1"/>
    <property type="molecule type" value="Genomic_DNA"/>
</dbReference>
<dbReference type="RefSeq" id="WP_011488934.1">
    <property type="nucleotide sequence ID" value="NC_007951.1"/>
</dbReference>
<dbReference type="SMR" id="Q13X40"/>
<dbReference type="STRING" id="266265.Bxe_A1606"/>
<dbReference type="KEGG" id="bxb:DR64_3765"/>
<dbReference type="KEGG" id="bxe:Bxe_A1606"/>
<dbReference type="PATRIC" id="fig|266265.5.peg.2952"/>
<dbReference type="eggNOG" id="COG0104">
    <property type="taxonomic scope" value="Bacteria"/>
</dbReference>
<dbReference type="OrthoDB" id="9807553at2"/>
<dbReference type="UniPathway" id="UPA00075">
    <property type="reaction ID" value="UER00335"/>
</dbReference>
<dbReference type="Proteomes" id="UP000001817">
    <property type="component" value="Chromosome 1"/>
</dbReference>
<dbReference type="GO" id="GO:0005737">
    <property type="term" value="C:cytoplasm"/>
    <property type="evidence" value="ECO:0007669"/>
    <property type="project" value="UniProtKB-SubCell"/>
</dbReference>
<dbReference type="GO" id="GO:0004019">
    <property type="term" value="F:adenylosuccinate synthase activity"/>
    <property type="evidence" value="ECO:0007669"/>
    <property type="project" value="UniProtKB-UniRule"/>
</dbReference>
<dbReference type="GO" id="GO:0005525">
    <property type="term" value="F:GTP binding"/>
    <property type="evidence" value="ECO:0007669"/>
    <property type="project" value="UniProtKB-UniRule"/>
</dbReference>
<dbReference type="GO" id="GO:0000287">
    <property type="term" value="F:magnesium ion binding"/>
    <property type="evidence" value="ECO:0007669"/>
    <property type="project" value="UniProtKB-UniRule"/>
</dbReference>
<dbReference type="GO" id="GO:0044208">
    <property type="term" value="P:'de novo' AMP biosynthetic process"/>
    <property type="evidence" value="ECO:0007669"/>
    <property type="project" value="UniProtKB-UniRule"/>
</dbReference>
<dbReference type="GO" id="GO:0046040">
    <property type="term" value="P:IMP metabolic process"/>
    <property type="evidence" value="ECO:0007669"/>
    <property type="project" value="TreeGrafter"/>
</dbReference>
<dbReference type="CDD" id="cd03108">
    <property type="entry name" value="AdSS"/>
    <property type="match status" value="1"/>
</dbReference>
<dbReference type="FunFam" id="1.10.300.10:FF:000001">
    <property type="entry name" value="Adenylosuccinate synthetase"/>
    <property type="match status" value="1"/>
</dbReference>
<dbReference type="FunFam" id="3.90.170.10:FF:000001">
    <property type="entry name" value="Adenylosuccinate synthetase"/>
    <property type="match status" value="1"/>
</dbReference>
<dbReference type="Gene3D" id="3.40.440.10">
    <property type="entry name" value="Adenylosuccinate Synthetase, subunit A, domain 1"/>
    <property type="match status" value="1"/>
</dbReference>
<dbReference type="Gene3D" id="1.10.300.10">
    <property type="entry name" value="Adenylosuccinate Synthetase, subunit A, domain 2"/>
    <property type="match status" value="1"/>
</dbReference>
<dbReference type="Gene3D" id="3.90.170.10">
    <property type="entry name" value="Adenylosuccinate Synthetase, subunit A, domain 3"/>
    <property type="match status" value="1"/>
</dbReference>
<dbReference type="HAMAP" id="MF_00011">
    <property type="entry name" value="Adenylosucc_synth"/>
    <property type="match status" value="1"/>
</dbReference>
<dbReference type="InterPro" id="IPR018220">
    <property type="entry name" value="Adenylosuccin_syn_GTP-bd"/>
</dbReference>
<dbReference type="InterPro" id="IPR033128">
    <property type="entry name" value="Adenylosuccin_syn_Lys_AS"/>
</dbReference>
<dbReference type="InterPro" id="IPR042109">
    <property type="entry name" value="Adenylosuccinate_synth_dom1"/>
</dbReference>
<dbReference type="InterPro" id="IPR042110">
    <property type="entry name" value="Adenylosuccinate_synth_dom2"/>
</dbReference>
<dbReference type="InterPro" id="IPR042111">
    <property type="entry name" value="Adenylosuccinate_synth_dom3"/>
</dbReference>
<dbReference type="InterPro" id="IPR001114">
    <property type="entry name" value="Adenylosuccinate_synthetase"/>
</dbReference>
<dbReference type="InterPro" id="IPR027417">
    <property type="entry name" value="P-loop_NTPase"/>
</dbReference>
<dbReference type="NCBIfam" id="NF002223">
    <property type="entry name" value="PRK01117.1"/>
    <property type="match status" value="1"/>
</dbReference>
<dbReference type="NCBIfam" id="TIGR00184">
    <property type="entry name" value="purA"/>
    <property type="match status" value="1"/>
</dbReference>
<dbReference type="PANTHER" id="PTHR11846">
    <property type="entry name" value="ADENYLOSUCCINATE SYNTHETASE"/>
    <property type="match status" value="1"/>
</dbReference>
<dbReference type="PANTHER" id="PTHR11846:SF0">
    <property type="entry name" value="ADENYLOSUCCINATE SYNTHETASE"/>
    <property type="match status" value="1"/>
</dbReference>
<dbReference type="Pfam" id="PF00709">
    <property type="entry name" value="Adenylsucc_synt"/>
    <property type="match status" value="1"/>
</dbReference>
<dbReference type="SMART" id="SM00788">
    <property type="entry name" value="Adenylsucc_synt"/>
    <property type="match status" value="1"/>
</dbReference>
<dbReference type="SUPFAM" id="SSF52540">
    <property type="entry name" value="P-loop containing nucleoside triphosphate hydrolases"/>
    <property type="match status" value="1"/>
</dbReference>
<dbReference type="PROSITE" id="PS01266">
    <property type="entry name" value="ADENYLOSUCCIN_SYN_1"/>
    <property type="match status" value="1"/>
</dbReference>
<dbReference type="PROSITE" id="PS00513">
    <property type="entry name" value="ADENYLOSUCCIN_SYN_2"/>
    <property type="match status" value="1"/>
</dbReference>
<name>PURA_PARXL</name>
<reference key="1">
    <citation type="journal article" date="2006" name="Proc. Natl. Acad. Sci. U.S.A.">
        <title>Burkholderia xenovorans LB400 harbors a multi-replicon, 9.73-Mbp genome shaped for versatility.</title>
        <authorList>
            <person name="Chain P.S.G."/>
            <person name="Denef V.J."/>
            <person name="Konstantinidis K.T."/>
            <person name="Vergez L.M."/>
            <person name="Agullo L."/>
            <person name="Reyes V.L."/>
            <person name="Hauser L."/>
            <person name="Cordova M."/>
            <person name="Gomez L."/>
            <person name="Gonzalez M."/>
            <person name="Land M."/>
            <person name="Lao V."/>
            <person name="Larimer F."/>
            <person name="LiPuma J.J."/>
            <person name="Mahenthiralingam E."/>
            <person name="Malfatti S.A."/>
            <person name="Marx C.J."/>
            <person name="Parnell J.J."/>
            <person name="Ramette A."/>
            <person name="Richardson P."/>
            <person name="Seeger M."/>
            <person name="Smith D."/>
            <person name="Spilker T."/>
            <person name="Sul W.J."/>
            <person name="Tsoi T.V."/>
            <person name="Ulrich L.E."/>
            <person name="Zhulin I.B."/>
            <person name="Tiedje J.M."/>
        </authorList>
    </citation>
    <scope>NUCLEOTIDE SEQUENCE [LARGE SCALE GENOMIC DNA]</scope>
    <source>
        <strain>LB400</strain>
    </source>
</reference>
<proteinExistence type="inferred from homology"/>
<protein>
    <recommendedName>
        <fullName evidence="1">Adenylosuccinate synthetase</fullName>
        <shortName evidence="1">AMPSase</shortName>
        <shortName evidence="1">AdSS</shortName>
        <ecNumber evidence="1">6.3.4.4</ecNumber>
    </recommendedName>
    <alternativeName>
        <fullName evidence="1">IMP--aspartate ligase</fullName>
    </alternativeName>
</protein>